<organism>
    <name type="scientific">Haemophilus influenzae (strain ATCC 51907 / DSM 11121 / KW20 / Rd)</name>
    <dbReference type="NCBI Taxonomy" id="71421"/>
    <lineage>
        <taxon>Bacteria</taxon>
        <taxon>Pseudomonadati</taxon>
        <taxon>Pseudomonadota</taxon>
        <taxon>Gammaproteobacteria</taxon>
        <taxon>Pasteurellales</taxon>
        <taxon>Pasteurellaceae</taxon>
        <taxon>Haemophilus</taxon>
    </lineage>
</organism>
<comment type="function">
    <text evidence="1">RNA polymerase that catalyzes the synthesis of short RNA molecules used as primers for DNA polymerase during DNA replication.</text>
</comment>
<comment type="catalytic activity">
    <reaction evidence="1">
        <text>ssDNA + n NTP = ssDNA/pppN(pN)n-1 hybrid + (n-1) diphosphate.</text>
        <dbReference type="EC" id="2.7.7.101"/>
    </reaction>
</comment>
<comment type="cofactor">
    <cofactor evidence="1">
        <name>Zn(2+)</name>
        <dbReference type="ChEBI" id="CHEBI:29105"/>
    </cofactor>
    <text evidence="1">Binds 1 zinc ion per monomer.</text>
</comment>
<comment type="cofactor">
    <cofactor evidence="1">
        <name>Mg(2+)</name>
        <dbReference type="ChEBI" id="CHEBI:18420"/>
    </cofactor>
    <text evidence="1">Binds two Mg(2+) per subunit.</text>
</comment>
<comment type="subunit">
    <text evidence="1">Monomer. Interacts with DnaB.</text>
</comment>
<comment type="domain">
    <text evidence="1">Contains an N-terminal zinc-binding domain, a central core domain that contains the primase activity, and a C-terminal DnaB-binding domain.</text>
</comment>
<comment type="similarity">
    <text evidence="1">Belongs to the DnaG primase family.</text>
</comment>
<dbReference type="EC" id="2.7.7.101" evidence="1"/>
<dbReference type="EMBL" id="L11044">
    <property type="status" value="NOT_ANNOTATED_CDS"/>
    <property type="molecule type" value="Unassigned_DNA"/>
</dbReference>
<dbReference type="EMBL" id="L42023">
    <property type="protein sequence ID" value="AAC22189.1"/>
    <property type="molecule type" value="Genomic_DNA"/>
</dbReference>
<dbReference type="EMBL" id="L01756">
    <property type="status" value="NOT_ANNOTATED_CDS"/>
    <property type="molecule type" value="Genomic_DNA"/>
</dbReference>
<dbReference type="PIR" id="A64075">
    <property type="entry name" value="A64075"/>
</dbReference>
<dbReference type="RefSeq" id="NP_438690.1">
    <property type="nucleotide sequence ID" value="NC_000907.1"/>
</dbReference>
<dbReference type="SMR" id="Q08346"/>
<dbReference type="STRING" id="71421.HI_0532"/>
<dbReference type="EnsemblBacteria" id="AAC22189">
    <property type="protein sequence ID" value="AAC22189"/>
    <property type="gene ID" value="HI_0532"/>
</dbReference>
<dbReference type="KEGG" id="hin:HI_0532"/>
<dbReference type="PATRIC" id="fig|71421.8.peg.551"/>
<dbReference type="eggNOG" id="COG0358">
    <property type="taxonomic scope" value="Bacteria"/>
</dbReference>
<dbReference type="HOGENOM" id="CLU_013501_5_1_6"/>
<dbReference type="OrthoDB" id="9803773at2"/>
<dbReference type="PhylomeDB" id="Q08346"/>
<dbReference type="BioCyc" id="HINF71421:G1GJ1-545-MONOMER"/>
<dbReference type="Proteomes" id="UP000000579">
    <property type="component" value="Chromosome"/>
</dbReference>
<dbReference type="GO" id="GO:0005737">
    <property type="term" value="C:cytoplasm"/>
    <property type="evidence" value="ECO:0000318"/>
    <property type="project" value="GO_Central"/>
</dbReference>
<dbReference type="GO" id="GO:0000428">
    <property type="term" value="C:DNA-directed RNA polymerase complex"/>
    <property type="evidence" value="ECO:0007669"/>
    <property type="project" value="UniProtKB-KW"/>
</dbReference>
<dbReference type="GO" id="GO:1990077">
    <property type="term" value="C:primosome complex"/>
    <property type="evidence" value="ECO:0007669"/>
    <property type="project" value="UniProtKB-KW"/>
</dbReference>
<dbReference type="GO" id="GO:0003677">
    <property type="term" value="F:DNA binding"/>
    <property type="evidence" value="ECO:0007669"/>
    <property type="project" value="UniProtKB-KW"/>
</dbReference>
<dbReference type="GO" id="GO:0003899">
    <property type="term" value="F:DNA-directed RNA polymerase activity"/>
    <property type="evidence" value="ECO:0007669"/>
    <property type="project" value="InterPro"/>
</dbReference>
<dbReference type="GO" id="GO:0008270">
    <property type="term" value="F:zinc ion binding"/>
    <property type="evidence" value="ECO:0007669"/>
    <property type="project" value="UniProtKB-UniRule"/>
</dbReference>
<dbReference type="GO" id="GO:0006269">
    <property type="term" value="P:DNA replication, synthesis of primer"/>
    <property type="evidence" value="ECO:0000318"/>
    <property type="project" value="GO_Central"/>
</dbReference>
<dbReference type="CDD" id="cd03364">
    <property type="entry name" value="TOPRIM_DnaG_primases"/>
    <property type="match status" value="1"/>
</dbReference>
<dbReference type="FunFam" id="3.40.1360.10:FF:000002">
    <property type="entry name" value="DNA primase"/>
    <property type="match status" value="1"/>
</dbReference>
<dbReference type="FunFam" id="3.90.580.10:FF:000001">
    <property type="entry name" value="DNA primase"/>
    <property type="match status" value="1"/>
</dbReference>
<dbReference type="FunFam" id="3.90.980.10:FF:000001">
    <property type="entry name" value="DNA primase"/>
    <property type="match status" value="1"/>
</dbReference>
<dbReference type="Gene3D" id="3.40.1360.10">
    <property type="match status" value="1"/>
</dbReference>
<dbReference type="Gene3D" id="3.90.980.10">
    <property type="entry name" value="DNA primase, catalytic core, N-terminal domain"/>
    <property type="match status" value="1"/>
</dbReference>
<dbReference type="Gene3D" id="1.10.860.10">
    <property type="entry name" value="DNAb Helicase, Chain A"/>
    <property type="match status" value="1"/>
</dbReference>
<dbReference type="Gene3D" id="1.20.50.20">
    <property type="entry name" value="DnaG, RNA polymerase domain, helical bundle"/>
    <property type="match status" value="1"/>
</dbReference>
<dbReference type="Gene3D" id="3.90.580.10">
    <property type="entry name" value="Zinc finger, CHC2-type domain"/>
    <property type="match status" value="1"/>
</dbReference>
<dbReference type="HAMAP" id="MF_00974">
    <property type="entry name" value="DNA_primase_DnaG"/>
    <property type="match status" value="1"/>
</dbReference>
<dbReference type="InterPro" id="IPR016136">
    <property type="entry name" value="DNA_helicase_N/primase_C"/>
</dbReference>
<dbReference type="InterPro" id="IPR037068">
    <property type="entry name" value="DNA_primase_core_N_sf"/>
</dbReference>
<dbReference type="InterPro" id="IPR019475">
    <property type="entry name" value="DNA_primase_DnaB-bd"/>
</dbReference>
<dbReference type="InterPro" id="IPR006295">
    <property type="entry name" value="DNA_primase_DnaG"/>
</dbReference>
<dbReference type="InterPro" id="IPR013173">
    <property type="entry name" value="DNA_primase_DnaG_DnaB-bd_dom"/>
</dbReference>
<dbReference type="InterPro" id="IPR036977">
    <property type="entry name" value="DNA_primase_Znf_CHC2"/>
</dbReference>
<dbReference type="InterPro" id="IPR030846">
    <property type="entry name" value="DnaG_bac"/>
</dbReference>
<dbReference type="InterPro" id="IPR013264">
    <property type="entry name" value="DNAG_N"/>
</dbReference>
<dbReference type="InterPro" id="IPR050219">
    <property type="entry name" value="DnaG_primase"/>
</dbReference>
<dbReference type="InterPro" id="IPR034151">
    <property type="entry name" value="TOPRIM_DnaG_bac"/>
</dbReference>
<dbReference type="InterPro" id="IPR006171">
    <property type="entry name" value="TOPRIM_dom"/>
</dbReference>
<dbReference type="InterPro" id="IPR002694">
    <property type="entry name" value="Znf_CHC2"/>
</dbReference>
<dbReference type="NCBIfam" id="TIGR01391">
    <property type="entry name" value="dnaG"/>
    <property type="match status" value="1"/>
</dbReference>
<dbReference type="PANTHER" id="PTHR30313">
    <property type="entry name" value="DNA PRIMASE"/>
    <property type="match status" value="1"/>
</dbReference>
<dbReference type="PANTHER" id="PTHR30313:SF2">
    <property type="entry name" value="DNA PRIMASE"/>
    <property type="match status" value="1"/>
</dbReference>
<dbReference type="Pfam" id="PF10410">
    <property type="entry name" value="DnaB_bind"/>
    <property type="match status" value="1"/>
</dbReference>
<dbReference type="Pfam" id="PF08278">
    <property type="entry name" value="DnaG_DnaB_bind"/>
    <property type="match status" value="1"/>
</dbReference>
<dbReference type="Pfam" id="PF08275">
    <property type="entry name" value="DNAG_N"/>
    <property type="match status" value="1"/>
</dbReference>
<dbReference type="Pfam" id="PF13155">
    <property type="entry name" value="Toprim_2"/>
    <property type="match status" value="1"/>
</dbReference>
<dbReference type="Pfam" id="PF01807">
    <property type="entry name" value="Zn_ribbon_DnaG"/>
    <property type="match status" value="1"/>
</dbReference>
<dbReference type="PIRSF" id="PIRSF002811">
    <property type="entry name" value="DnaG"/>
    <property type="match status" value="1"/>
</dbReference>
<dbReference type="SMART" id="SM00766">
    <property type="entry name" value="DnaG_DnaB_bind"/>
    <property type="match status" value="1"/>
</dbReference>
<dbReference type="SMART" id="SM00493">
    <property type="entry name" value="TOPRIM"/>
    <property type="match status" value="1"/>
</dbReference>
<dbReference type="SMART" id="SM00400">
    <property type="entry name" value="ZnF_CHCC"/>
    <property type="match status" value="1"/>
</dbReference>
<dbReference type="SUPFAM" id="SSF56731">
    <property type="entry name" value="DNA primase core"/>
    <property type="match status" value="1"/>
</dbReference>
<dbReference type="SUPFAM" id="SSF117023">
    <property type="entry name" value="DNA primase DnaG, C-terminal domain"/>
    <property type="match status" value="1"/>
</dbReference>
<dbReference type="SUPFAM" id="SSF57783">
    <property type="entry name" value="Zinc beta-ribbon"/>
    <property type="match status" value="1"/>
</dbReference>
<dbReference type="PROSITE" id="PS50880">
    <property type="entry name" value="TOPRIM"/>
    <property type="match status" value="1"/>
</dbReference>
<evidence type="ECO:0000255" key="1">
    <source>
        <dbReference type="HAMAP-Rule" id="MF_00974"/>
    </source>
</evidence>
<evidence type="ECO:0000305" key="2"/>
<protein>
    <recommendedName>
        <fullName evidence="1">DNA primase</fullName>
        <ecNumber evidence="1">2.7.7.101</ecNumber>
    </recommendedName>
</protein>
<feature type="chain" id="PRO_0000180494" description="DNA primase">
    <location>
        <begin position="1"/>
        <end position="593"/>
    </location>
</feature>
<feature type="domain" description="Toprim" evidence="1">
    <location>
        <begin position="260"/>
        <end position="342"/>
    </location>
</feature>
<feature type="zinc finger region" description="CHC2-type" evidence="1">
    <location>
        <begin position="40"/>
        <end position="64"/>
    </location>
</feature>
<feature type="binding site" evidence="1">
    <location>
        <position position="266"/>
    </location>
    <ligand>
        <name>Mg(2+)</name>
        <dbReference type="ChEBI" id="CHEBI:18420"/>
        <label>1</label>
        <note>catalytic</note>
    </ligand>
</feature>
<feature type="binding site" evidence="1">
    <location>
        <position position="310"/>
    </location>
    <ligand>
        <name>Mg(2+)</name>
        <dbReference type="ChEBI" id="CHEBI:18420"/>
        <label>1</label>
        <note>catalytic</note>
    </ligand>
</feature>
<feature type="binding site" evidence="1">
    <location>
        <position position="310"/>
    </location>
    <ligand>
        <name>Mg(2+)</name>
        <dbReference type="ChEBI" id="CHEBI:18420"/>
        <label>2</label>
    </ligand>
</feature>
<feature type="binding site" evidence="1">
    <location>
        <position position="312"/>
    </location>
    <ligand>
        <name>Mg(2+)</name>
        <dbReference type="ChEBI" id="CHEBI:18420"/>
        <label>2</label>
    </ligand>
</feature>
<feature type="sequence conflict" description="In Ref. 1; L01756." evidence="2" ref="1">
    <original>I</original>
    <variation>V</variation>
    <location>
        <position position="83"/>
    </location>
</feature>
<feature type="sequence conflict" description="In Ref. 1; L01756." evidence="2" ref="1">
    <original>V</original>
    <variation>A</variation>
    <location>
        <position position="103"/>
    </location>
</feature>
<feature type="sequence conflict" description="In Ref. 1; L01756." evidence="2" ref="1">
    <original>T</original>
    <variation>S</variation>
    <location>
        <position position="138"/>
    </location>
</feature>
<feature type="sequence conflict" description="In Ref. 1; L01756." evidence="2" ref="1">
    <original>L</original>
    <variation>F</variation>
    <location>
        <position position="299"/>
    </location>
</feature>
<feature type="sequence conflict" description="In Ref. 1; L01756." evidence="2" ref="1">
    <original>E</original>
    <variation>D</variation>
    <location>
        <position position="346"/>
    </location>
</feature>
<feature type="sequence conflict" description="In Ref. 1; L01756." evidence="2" ref="1">
    <original>K</original>
    <variation>Q</variation>
    <location>
        <position position="435"/>
    </location>
</feature>
<feature type="sequence conflict" description="In Ref. 1; L01756." evidence="2" ref="1">
    <original>M</original>
    <variation>L</variation>
    <location>
        <position position="463"/>
    </location>
</feature>
<reference key="1">
    <citation type="journal article" date="1993" name="Gene">
        <title>The Haemophilus influenzae dnaG sequence and conserved bacterial primase motifs.</title>
        <authorList>
            <person name="Versalovic J."/>
            <person name="Lupski J.R."/>
        </authorList>
    </citation>
    <scope>NUCLEOTIDE SEQUENCE [GENOMIC DNA]</scope>
    <source>
        <strain>Isolate 1775</strain>
    </source>
</reference>
<reference key="2">
    <citation type="journal article" date="1995" name="Science">
        <title>Whole-genome random sequencing and assembly of Haemophilus influenzae Rd.</title>
        <authorList>
            <person name="Fleischmann R.D."/>
            <person name="Adams M.D."/>
            <person name="White O."/>
            <person name="Clayton R.A."/>
            <person name="Kirkness E.F."/>
            <person name="Kerlavage A.R."/>
            <person name="Bult C.J."/>
            <person name="Tomb J.-F."/>
            <person name="Dougherty B.A."/>
            <person name="Merrick J.M."/>
            <person name="McKenney K."/>
            <person name="Sutton G.G."/>
            <person name="FitzHugh W."/>
            <person name="Fields C.A."/>
            <person name="Gocayne J.D."/>
            <person name="Scott J.D."/>
            <person name="Shirley R."/>
            <person name="Liu L.-I."/>
            <person name="Glodek A."/>
            <person name="Kelley J.M."/>
            <person name="Weidman J.F."/>
            <person name="Phillips C.A."/>
            <person name="Spriggs T."/>
            <person name="Hedblom E."/>
            <person name="Cotton M.D."/>
            <person name="Utterback T.R."/>
            <person name="Hanna M.C."/>
            <person name="Nguyen D.T."/>
            <person name="Saudek D.M."/>
            <person name="Brandon R.C."/>
            <person name="Fine L.D."/>
            <person name="Fritchman J.L."/>
            <person name="Fuhrmann J.L."/>
            <person name="Geoghagen N.S.M."/>
            <person name="Gnehm C.L."/>
            <person name="McDonald L.A."/>
            <person name="Small K.V."/>
            <person name="Fraser C.M."/>
            <person name="Smith H.O."/>
            <person name="Venter J.C."/>
        </authorList>
    </citation>
    <scope>NUCLEOTIDE SEQUENCE [LARGE SCALE GENOMIC DNA]</scope>
    <source>
        <strain>ATCC 51907 / DSM 11121 / KW20 / Rd</strain>
    </source>
</reference>
<reference key="3">
    <citation type="journal article" date="1993" name="Mol. Microbiol.">
        <title>Conservation and evolution of the rpsU-dnaG-rpoD macromolecular synthesis operon in bacteria.</title>
        <authorList>
            <person name="Versalovic J."/>
            <person name="Lupski J.R."/>
        </authorList>
    </citation>
    <scope>NUCLEOTIDE SEQUENCE [GENOMIC DNA] OF 1-5</scope>
    <source>
        <strain>Isolate 1775</strain>
    </source>
</reference>
<sequence length="593" mass="68001">MKGSIPRPFIDDLLTKSDIVDVINTRVKLKKAGRDYQACCPFHHEKTPSFTVSQKKQFYHCFGCGAHGNAISFLMDYDKLEFIEAIEELAAMAGLEIPYEKRVNHSGKPQANYQTKRNLYELMQEIATFYQNQLPLNTQAQEYLQQRGLSPEIIERFQIGFVPNAMDTVLRKFGVNREEQQKLIELGMLSRNDRGNIYDKFRNRIMFPIRDKRGRTVAFGGRVLTDEKPKYLNSPETITYHKGKELYGLYEALQTNDEPKQLLVVEGYMDVVALAQFGVDYAVASLGTSTTSEQIQLILRSTEQVVCCYDGDRAGRDAAWRALENALPYLEDGRQLKFIFLPDGEEPDTYIRQYGKEKFEEYIESAQSLSEFMFAHLSPQVDFSTKEGRGKLVALAAPLIHQIPGEMLRLSLRNMLAQKLGIFDQTQLENLIPKKLEQANTQQKVTHNKIKKTPMRMVISLLMQNPELVKRMSESGVQALRAEAGFEILEKLTALCRQREGITTGQILEYFRNTSYSNPLEILATWDHLLDESDIINAFSQNYRRLNIQAIERDIEMLIAKERTEGLTNEEKTVLVHLLAGKEQQKKQLVNPL</sequence>
<keyword id="KW-0235">DNA replication</keyword>
<keyword id="KW-0238">DNA-binding</keyword>
<keyword id="KW-0240">DNA-directed RNA polymerase</keyword>
<keyword id="KW-0460">Magnesium</keyword>
<keyword id="KW-0479">Metal-binding</keyword>
<keyword id="KW-0548">Nucleotidyltransferase</keyword>
<keyword id="KW-0639">Primosome</keyword>
<keyword id="KW-1185">Reference proteome</keyword>
<keyword id="KW-0804">Transcription</keyword>
<keyword id="KW-0808">Transferase</keyword>
<keyword id="KW-0862">Zinc</keyword>
<keyword id="KW-0863">Zinc-finger</keyword>
<gene>
    <name evidence="1" type="primary">dnaG</name>
    <name type="ordered locus">HI_0532</name>
</gene>
<name>DNAG_HAEIN</name>
<accession>Q08346</accession>
<proteinExistence type="inferred from homology"/>